<gene>
    <name evidence="1" type="primary">zapA</name>
    <name type="ordered locus">SPC_3121</name>
</gene>
<comment type="function">
    <text evidence="1">Activator of cell division through the inhibition of FtsZ GTPase activity, therefore promoting FtsZ assembly into bundles of protofilaments necessary for the formation of the division Z ring. It is recruited early at mid-cell but it is not essential for cell division.</text>
</comment>
<comment type="subunit">
    <text evidence="1">Homodimer. Interacts with FtsZ.</text>
</comment>
<comment type="subcellular location">
    <subcellularLocation>
        <location evidence="1">Cytoplasm</location>
    </subcellularLocation>
    <text evidence="1">Localizes at mid-cell.</text>
</comment>
<comment type="similarity">
    <text evidence="1">Belongs to the ZapA family. Type 1 subfamily.</text>
</comment>
<sequence>MSAQPVDIQIFGRSLRVNCPPDQRDALNQAADDLNQRLQDLKVRTRVTNTEQLVFIAALNISYELTQEKAKTRDYAASMEQRIRMLQQTIEQALLDQGRITEKTGQNFE</sequence>
<protein>
    <recommendedName>
        <fullName evidence="1">Cell division protein ZapA</fullName>
    </recommendedName>
    <alternativeName>
        <fullName evidence="1">Z ring-associated protein ZapA</fullName>
    </alternativeName>
</protein>
<name>ZAPA_SALPC</name>
<proteinExistence type="inferred from homology"/>
<reference key="1">
    <citation type="journal article" date="2009" name="PLoS ONE">
        <title>Salmonella paratyphi C: genetic divergence from Salmonella choleraesuis and pathogenic convergence with Salmonella typhi.</title>
        <authorList>
            <person name="Liu W.-Q."/>
            <person name="Feng Y."/>
            <person name="Wang Y."/>
            <person name="Zou Q.-H."/>
            <person name="Chen F."/>
            <person name="Guo J.-T."/>
            <person name="Peng Y.-H."/>
            <person name="Jin Y."/>
            <person name="Li Y.-G."/>
            <person name="Hu S.-N."/>
            <person name="Johnston R.N."/>
            <person name="Liu G.-R."/>
            <person name="Liu S.-L."/>
        </authorList>
    </citation>
    <scope>NUCLEOTIDE SEQUENCE [LARGE SCALE GENOMIC DNA]</scope>
    <source>
        <strain>RKS4594</strain>
    </source>
</reference>
<accession>C0PY34</accession>
<dbReference type="EMBL" id="CP000857">
    <property type="protein sequence ID" value="ACN47208.1"/>
    <property type="molecule type" value="Genomic_DNA"/>
</dbReference>
<dbReference type="RefSeq" id="WP_001276011.1">
    <property type="nucleotide sequence ID" value="NC_012125.1"/>
</dbReference>
<dbReference type="SMR" id="C0PY34"/>
<dbReference type="GeneID" id="66757358"/>
<dbReference type="KEGG" id="sei:SPC_3121"/>
<dbReference type="HOGENOM" id="CLU_116623_3_0_6"/>
<dbReference type="Proteomes" id="UP000001599">
    <property type="component" value="Chromosome"/>
</dbReference>
<dbReference type="GO" id="GO:0032153">
    <property type="term" value="C:cell division site"/>
    <property type="evidence" value="ECO:0007669"/>
    <property type="project" value="TreeGrafter"/>
</dbReference>
<dbReference type="GO" id="GO:0030428">
    <property type="term" value="C:cell septum"/>
    <property type="evidence" value="ECO:0007669"/>
    <property type="project" value="TreeGrafter"/>
</dbReference>
<dbReference type="GO" id="GO:0005829">
    <property type="term" value="C:cytosol"/>
    <property type="evidence" value="ECO:0007669"/>
    <property type="project" value="TreeGrafter"/>
</dbReference>
<dbReference type="GO" id="GO:0005886">
    <property type="term" value="C:plasma membrane"/>
    <property type="evidence" value="ECO:0007669"/>
    <property type="project" value="UniProtKB-UniRule"/>
</dbReference>
<dbReference type="GO" id="GO:0000917">
    <property type="term" value="P:division septum assembly"/>
    <property type="evidence" value="ECO:0007669"/>
    <property type="project" value="UniProtKB-KW"/>
</dbReference>
<dbReference type="GO" id="GO:0043093">
    <property type="term" value="P:FtsZ-dependent cytokinesis"/>
    <property type="evidence" value="ECO:0007669"/>
    <property type="project" value="TreeGrafter"/>
</dbReference>
<dbReference type="GO" id="GO:0000921">
    <property type="term" value="P:septin ring assembly"/>
    <property type="evidence" value="ECO:0007669"/>
    <property type="project" value="TreeGrafter"/>
</dbReference>
<dbReference type="FunFam" id="1.20.5.50:FF:000001">
    <property type="entry name" value="Cell division protein ZapA"/>
    <property type="match status" value="1"/>
</dbReference>
<dbReference type="FunFam" id="3.30.160.880:FF:000001">
    <property type="entry name" value="Cell division protein ZapA"/>
    <property type="match status" value="1"/>
</dbReference>
<dbReference type="Gene3D" id="1.20.5.50">
    <property type="match status" value="1"/>
</dbReference>
<dbReference type="Gene3D" id="3.30.160.880">
    <property type="entry name" value="Cell division protein ZapA protomer, N-terminal domain"/>
    <property type="match status" value="1"/>
</dbReference>
<dbReference type="HAMAP" id="MF_02012">
    <property type="entry name" value="ZapA_type1"/>
    <property type="match status" value="1"/>
</dbReference>
<dbReference type="InterPro" id="IPR007838">
    <property type="entry name" value="Cell_div_ZapA-like"/>
</dbReference>
<dbReference type="InterPro" id="IPR036192">
    <property type="entry name" value="Cell_div_ZapA-like_sf"/>
</dbReference>
<dbReference type="InterPro" id="IPR023771">
    <property type="entry name" value="Cell_div_ZapA_eubact"/>
</dbReference>
<dbReference type="InterPro" id="IPR042233">
    <property type="entry name" value="Cell_div_ZapA_N"/>
</dbReference>
<dbReference type="NCBIfam" id="NF008209">
    <property type="entry name" value="PRK10972.1"/>
    <property type="match status" value="1"/>
</dbReference>
<dbReference type="PANTHER" id="PTHR34981">
    <property type="entry name" value="CELL DIVISION PROTEIN ZAPA"/>
    <property type="match status" value="1"/>
</dbReference>
<dbReference type="PANTHER" id="PTHR34981:SF1">
    <property type="entry name" value="CELL DIVISION PROTEIN ZAPA"/>
    <property type="match status" value="1"/>
</dbReference>
<dbReference type="Pfam" id="PF05164">
    <property type="entry name" value="ZapA"/>
    <property type="match status" value="1"/>
</dbReference>
<dbReference type="SUPFAM" id="SSF102829">
    <property type="entry name" value="Cell division protein ZapA-like"/>
    <property type="match status" value="1"/>
</dbReference>
<feature type="chain" id="PRO_1000189523" description="Cell division protein ZapA">
    <location>
        <begin position="1"/>
        <end position="109"/>
    </location>
</feature>
<feature type="coiled-coil region" evidence="1">
    <location>
        <begin position="21"/>
        <end position="97"/>
    </location>
</feature>
<evidence type="ECO:0000255" key="1">
    <source>
        <dbReference type="HAMAP-Rule" id="MF_02012"/>
    </source>
</evidence>
<keyword id="KW-0131">Cell cycle</keyword>
<keyword id="KW-0132">Cell division</keyword>
<keyword id="KW-0175">Coiled coil</keyword>
<keyword id="KW-0963">Cytoplasm</keyword>
<keyword id="KW-0717">Septation</keyword>
<organism>
    <name type="scientific">Salmonella paratyphi C (strain RKS4594)</name>
    <dbReference type="NCBI Taxonomy" id="476213"/>
    <lineage>
        <taxon>Bacteria</taxon>
        <taxon>Pseudomonadati</taxon>
        <taxon>Pseudomonadota</taxon>
        <taxon>Gammaproteobacteria</taxon>
        <taxon>Enterobacterales</taxon>
        <taxon>Enterobacteriaceae</taxon>
        <taxon>Salmonella</taxon>
    </lineage>
</organism>